<protein>
    <recommendedName>
        <fullName evidence="2">ATP synthase subunit alpha</fullName>
        <ecNumber evidence="2">7.1.2.2</ecNumber>
    </recommendedName>
    <alternativeName>
        <fullName evidence="2">ATP synthase F1 sector subunit alpha</fullName>
    </alternativeName>
    <alternativeName>
        <fullName evidence="2">F-ATPase subunit alpha</fullName>
    </alternativeName>
</protein>
<accession>Q7V5S7</accession>
<feature type="chain" id="PRO_0000238322" description="ATP synthase subunit alpha">
    <location>
        <begin position="1"/>
        <end position="505"/>
    </location>
</feature>
<feature type="binding site" evidence="2">
    <location>
        <begin position="170"/>
        <end position="177"/>
    </location>
    <ligand>
        <name>ATP</name>
        <dbReference type="ChEBI" id="CHEBI:30616"/>
    </ligand>
</feature>
<feature type="site" description="Required for activity" evidence="2">
    <location>
        <position position="363"/>
    </location>
</feature>
<gene>
    <name evidence="2" type="primary">atpA</name>
    <name type="ordered locus">PMT_1467</name>
</gene>
<proteinExistence type="inferred from homology"/>
<reference key="1">
    <citation type="journal article" date="2003" name="Nature">
        <title>Genome divergence in two Prochlorococcus ecotypes reflects oceanic niche differentiation.</title>
        <authorList>
            <person name="Rocap G."/>
            <person name="Larimer F.W."/>
            <person name="Lamerdin J.E."/>
            <person name="Malfatti S."/>
            <person name="Chain P."/>
            <person name="Ahlgren N.A."/>
            <person name="Arellano A."/>
            <person name="Coleman M."/>
            <person name="Hauser L."/>
            <person name="Hess W.R."/>
            <person name="Johnson Z.I."/>
            <person name="Land M.L."/>
            <person name="Lindell D."/>
            <person name="Post A.F."/>
            <person name="Regala W."/>
            <person name="Shah M."/>
            <person name="Shaw S.L."/>
            <person name="Steglich C."/>
            <person name="Sullivan M.B."/>
            <person name="Ting C.S."/>
            <person name="Tolonen A."/>
            <person name="Webb E.A."/>
            <person name="Zinser E.R."/>
            <person name="Chisholm S.W."/>
        </authorList>
    </citation>
    <scope>NUCLEOTIDE SEQUENCE [LARGE SCALE GENOMIC DNA]</scope>
    <source>
        <strain>MIT 9313</strain>
    </source>
</reference>
<organism>
    <name type="scientific">Prochlorococcus marinus (strain MIT 9313)</name>
    <dbReference type="NCBI Taxonomy" id="74547"/>
    <lineage>
        <taxon>Bacteria</taxon>
        <taxon>Bacillati</taxon>
        <taxon>Cyanobacteriota</taxon>
        <taxon>Cyanophyceae</taxon>
        <taxon>Synechococcales</taxon>
        <taxon>Prochlorococcaceae</taxon>
        <taxon>Prochlorococcus</taxon>
    </lineage>
</organism>
<sequence length="505" mass="54046">MVSIRPDEISAILKQQISDYDKSVSVSNVGTVLQIGDGIARVYGLEQVMAGELVEFEDGTEGIALNLEDDNVGAVLMGEGVGIQEGSTVKATGKIASVPVSDEMLGRVVTPLGQPMDGKGDIPSTESRLIESIAPGIIKRKSVHEPLQTGITSIDSMIPIGRGQRELIIGDRQTGKTAIAIDTIINQKGEDVVCVYVAVGQKAASVANVVEVLREKGALDYTVIVAASASDPAALQYLAPYTGAAIAESFMYKGKATLVIYDDLTKQAQAYRQMSLLLRRPPGREAYPGDVFYLHSRLLERAAKLSDAMGSGSMTALPIIETQAGDVSAYIPTNVISITDGQIFLSSDLFNSGLRPAINVGISVSRVGGAAQTKAIKKIAGTLKLELAQFDELAAFSQFASDLDEATQKQLGRGKRLRELLKQPQFAPLNLAEQVAIVYAGVKGLIDEVPEDQVTQFSRELRDYLKTNKPEYITKVQTEKVLNEDAETILKAAINEVKSSMLASA</sequence>
<comment type="function">
    <text evidence="2">Produces ATP from ADP in the presence of a proton gradient across the membrane. The alpha chain is a regulatory subunit.</text>
</comment>
<comment type="catalytic activity">
    <reaction evidence="2">
        <text>ATP + H2O + 4 H(+)(in) = ADP + phosphate + 5 H(+)(out)</text>
        <dbReference type="Rhea" id="RHEA:57720"/>
        <dbReference type="ChEBI" id="CHEBI:15377"/>
        <dbReference type="ChEBI" id="CHEBI:15378"/>
        <dbReference type="ChEBI" id="CHEBI:30616"/>
        <dbReference type="ChEBI" id="CHEBI:43474"/>
        <dbReference type="ChEBI" id="CHEBI:456216"/>
        <dbReference type="EC" id="7.1.2.2"/>
    </reaction>
</comment>
<comment type="subunit">
    <text evidence="1">F-type ATPases have 2 components, CF(1) - the catalytic core - and CF(0) - the membrane proton channel. CF(1) has five subunits: alpha(3), beta(3), gamma(1), delta(1), epsilon(1). CF(0) has four main subunits: a(1), b(1), b'(1) and c(9-12) (By similarity).</text>
</comment>
<comment type="subcellular location">
    <subcellularLocation>
        <location evidence="2">Cellular thylakoid membrane</location>
        <topology evidence="2">Peripheral membrane protein</topology>
    </subcellularLocation>
</comment>
<comment type="similarity">
    <text evidence="2">Belongs to the ATPase alpha/beta chains family.</text>
</comment>
<evidence type="ECO:0000250" key="1"/>
<evidence type="ECO:0000255" key="2">
    <source>
        <dbReference type="HAMAP-Rule" id="MF_01346"/>
    </source>
</evidence>
<name>ATPA_PROMM</name>
<keyword id="KW-0066">ATP synthesis</keyword>
<keyword id="KW-0067">ATP-binding</keyword>
<keyword id="KW-0139">CF(1)</keyword>
<keyword id="KW-0375">Hydrogen ion transport</keyword>
<keyword id="KW-0406">Ion transport</keyword>
<keyword id="KW-0472">Membrane</keyword>
<keyword id="KW-0547">Nucleotide-binding</keyword>
<keyword id="KW-1185">Reference proteome</keyword>
<keyword id="KW-0793">Thylakoid</keyword>
<keyword id="KW-1278">Translocase</keyword>
<keyword id="KW-0813">Transport</keyword>
<dbReference type="EC" id="7.1.2.2" evidence="2"/>
<dbReference type="EMBL" id="BX548175">
    <property type="protein sequence ID" value="CAE21642.1"/>
    <property type="molecule type" value="Genomic_DNA"/>
</dbReference>
<dbReference type="RefSeq" id="WP_011130835.1">
    <property type="nucleotide sequence ID" value="NC_005071.1"/>
</dbReference>
<dbReference type="SMR" id="Q7V5S7"/>
<dbReference type="KEGG" id="pmt:PMT_1467"/>
<dbReference type="eggNOG" id="COG0056">
    <property type="taxonomic scope" value="Bacteria"/>
</dbReference>
<dbReference type="HOGENOM" id="CLU_010091_2_1_3"/>
<dbReference type="OrthoDB" id="9803053at2"/>
<dbReference type="Proteomes" id="UP000001423">
    <property type="component" value="Chromosome"/>
</dbReference>
<dbReference type="GO" id="GO:0031676">
    <property type="term" value="C:plasma membrane-derived thylakoid membrane"/>
    <property type="evidence" value="ECO:0007669"/>
    <property type="project" value="UniProtKB-SubCell"/>
</dbReference>
<dbReference type="GO" id="GO:0045259">
    <property type="term" value="C:proton-transporting ATP synthase complex"/>
    <property type="evidence" value="ECO:0007669"/>
    <property type="project" value="UniProtKB-KW"/>
</dbReference>
<dbReference type="GO" id="GO:0043531">
    <property type="term" value="F:ADP binding"/>
    <property type="evidence" value="ECO:0007669"/>
    <property type="project" value="TreeGrafter"/>
</dbReference>
<dbReference type="GO" id="GO:0005524">
    <property type="term" value="F:ATP binding"/>
    <property type="evidence" value="ECO:0007669"/>
    <property type="project" value="UniProtKB-UniRule"/>
</dbReference>
<dbReference type="GO" id="GO:0046933">
    <property type="term" value="F:proton-transporting ATP synthase activity, rotational mechanism"/>
    <property type="evidence" value="ECO:0007669"/>
    <property type="project" value="UniProtKB-UniRule"/>
</dbReference>
<dbReference type="CDD" id="cd18113">
    <property type="entry name" value="ATP-synt_F1_alpha_C"/>
    <property type="match status" value="1"/>
</dbReference>
<dbReference type="CDD" id="cd18116">
    <property type="entry name" value="ATP-synt_F1_alpha_N"/>
    <property type="match status" value="1"/>
</dbReference>
<dbReference type="CDD" id="cd01132">
    <property type="entry name" value="F1-ATPase_alpha_CD"/>
    <property type="match status" value="1"/>
</dbReference>
<dbReference type="FunFam" id="1.20.150.20:FF:000001">
    <property type="entry name" value="ATP synthase subunit alpha"/>
    <property type="match status" value="1"/>
</dbReference>
<dbReference type="FunFam" id="2.40.30.20:FF:000001">
    <property type="entry name" value="ATP synthase subunit alpha"/>
    <property type="match status" value="1"/>
</dbReference>
<dbReference type="FunFam" id="3.40.50.300:FF:000002">
    <property type="entry name" value="ATP synthase subunit alpha"/>
    <property type="match status" value="1"/>
</dbReference>
<dbReference type="Gene3D" id="2.40.30.20">
    <property type="match status" value="1"/>
</dbReference>
<dbReference type="Gene3D" id="1.20.150.20">
    <property type="entry name" value="ATP synthase alpha/beta chain, C-terminal domain"/>
    <property type="match status" value="1"/>
</dbReference>
<dbReference type="Gene3D" id="3.40.50.300">
    <property type="entry name" value="P-loop containing nucleotide triphosphate hydrolases"/>
    <property type="match status" value="1"/>
</dbReference>
<dbReference type="HAMAP" id="MF_01346">
    <property type="entry name" value="ATP_synth_alpha_bact"/>
    <property type="match status" value="1"/>
</dbReference>
<dbReference type="InterPro" id="IPR023366">
    <property type="entry name" value="ATP_synth_asu-like_sf"/>
</dbReference>
<dbReference type="InterPro" id="IPR000793">
    <property type="entry name" value="ATP_synth_asu_C"/>
</dbReference>
<dbReference type="InterPro" id="IPR038376">
    <property type="entry name" value="ATP_synth_asu_C_sf"/>
</dbReference>
<dbReference type="InterPro" id="IPR033732">
    <property type="entry name" value="ATP_synth_F1_a_nt-bd_dom"/>
</dbReference>
<dbReference type="InterPro" id="IPR005294">
    <property type="entry name" value="ATP_synth_F1_asu"/>
</dbReference>
<dbReference type="InterPro" id="IPR020003">
    <property type="entry name" value="ATPase_a/bsu_AS"/>
</dbReference>
<dbReference type="InterPro" id="IPR004100">
    <property type="entry name" value="ATPase_F1/V1/A1_a/bsu_N"/>
</dbReference>
<dbReference type="InterPro" id="IPR036121">
    <property type="entry name" value="ATPase_F1/V1/A1_a/bsu_N_sf"/>
</dbReference>
<dbReference type="InterPro" id="IPR000194">
    <property type="entry name" value="ATPase_F1/V1/A1_a/bsu_nucl-bd"/>
</dbReference>
<dbReference type="InterPro" id="IPR027417">
    <property type="entry name" value="P-loop_NTPase"/>
</dbReference>
<dbReference type="NCBIfam" id="TIGR00962">
    <property type="entry name" value="atpA"/>
    <property type="match status" value="1"/>
</dbReference>
<dbReference type="NCBIfam" id="NF009884">
    <property type="entry name" value="PRK13343.1"/>
    <property type="match status" value="1"/>
</dbReference>
<dbReference type="PANTHER" id="PTHR48082">
    <property type="entry name" value="ATP SYNTHASE SUBUNIT ALPHA, MITOCHONDRIAL"/>
    <property type="match status" value="1"/>
</dbReference>
<dbReference type="PANTHER" id="PTHR48082:SF2">
    <property type="entry name" value="ATP SYNTHASE SUBUNIT ALPHA, MITOCHONDRIAL"/>
    <property type="match status" value="1"/>
</dbReference>
<dbReference type="Pfam" id="PF00006">
    <property type="entry name" value="ATP-synt_ab"/>
    <property type="match status" value="1"/>
</dbReference>
<dbReference type="Pfam" id="PF00306">
    <property type="entry name" value="ATP-synt_ab_C"/>
    <property type="match status" value="1"/>
</dbReference>
<dbReference type="Pfam" id="PF02874">
    <property type="entry name" value="ATP-synt_ab_N"/>
    <property type="match status" value="1"/>
</dbReference>
<dbReference type="PIRSF" id="PIRSF039088">
    <property type="entry name" value="F_ATPase_subunit_alpha"/>
    <property type="match status" value="1"/>
</dbReference>
<dbReference type="SUPFAM" id="SSF47917">
    <property type="entry name" value="C-terminal domain of alpha and beta subunits of F1 ATP synthase"/>
    <property type="match status" value="1"/>
</dbReference>
<dbReference type="SUPFAM" id="SSF50615">
    <property type="entry name" value="N-terminal domain of alpha and beta subunits of F1 ATP synthase"/>
    <property type="match status" value="1"/>
</dbReference>
<dbReference type="SUPFAM" id="SSF52540">
    <property type="entry name" value="P-loop containing nucleoside triphosphate hydrolases"/>
    <property type="match status" value="1"/>
</dbReference>
<dbReference type="PROSITE" id="PS00152">
    <property type="entry name" value="ATPASE_ALPHA_BETA"/>
    <property type="match status" value="1"/>
</dbReference>